<name>HN_MUMPZ</name>
<proteinExistence type="evidence at protein level"/>
<evidence type="ECO:0000250" key="1">
    <source>
        <dbReference type="UniProtKB" id="P04853"/>
    </source>
</evidence>
<evidence type="ECO:0000250" key="2">
    <source>
        <dbReference type="UniProtKB" id="Q786F2"/>
    </source>
</evidence>
<evidence type="ECO:0000250" key="3">
    <source>
        <dbReference type="UniProtKB" id="Q91UL0"/>
    </source>
</evidence>
<evidence type="ECO:0000250" key="4">
    <source>
        <dbReference type="UniProtKB" id="Q9WAF5"/>
    </source>
</evidence>
<evidence type="ECO:0000255" key="5"/>
<evidence type="ECO:0000305" key="6"/>
<evidence type="ECO:0000305" key="7">
    <source>
    </source>
</evidence>
<evidence type="ECO:0000305" key="8">
    <source>
    </source>
</evidence>
<keyword id="KW-1015">Disulfide bond</keyword>
<keyword id="KW-0325">Glycoprotein</keyword>
<keyword id="KW-0348">Hemagglutinin</keyword>
<keyword id="KW-1032">Host cell membrane</keyword>
<keyword id="KW-1043">Host membrane</keyword>
<keyword id="KW-0945">Host-virus interaction</keyword>
<keyword id="KW-0378">Hydrolase</keyword>
<keyword id="KW-0472">Membrane</keyword>
<keyword id="KW-0735">Signal-anchor</keyword>
<keyword id="KW-0812">Transmembrane</keyword>
<keyword id="KW-1133">Transmembrane helix</keyword>
<keyword id="KW-1161">Viral attachment to host cell</keyword>
<keyword id="KW-0261">Viral envelope protein</keyword>
<keyword id="KW-0946">Virion</keyword>
<keyword id="KW-1160">Virus entry into host cell</keyword>
<accession>Q5SC51</accession>
<organismHost>
    <name type="scientific">Homo sapiens</name>
    <name type="common">Human</name>
    <dbReference type="NCBI Taxonomy" id="9606"/>
</organismHost>
<gene>
    <name type="primary">HN</name>
</gene>
<protein>
    <recommendedName>
        <fullName>Hemagglutinin-neuraminidase</fullName>
        <ecNumber evidence="4">3.2.1.18</ecNumber>
    </recommendedName>
</protein>
<dbReference type="EC" id="3.2.1.18" evidence="4"/>
<dbReference type="EMBL" id="AY685920">
    <property type="protein sequence ID" value="AAV65063.1"/>
    <property type="molecule type" value="Genomic_RNA"/>
</dbReference>
<dbReference type="EMBL" id="AY685921">
    <property type="protein sequence ID" value="AAV65072.1"/>
    <property type="molecule type" value="Genomic_RNA"/>
</dbReference>
<dbReference type="SMR" id="Q5SC51"/>
<dbReference type="GlyCosmos" id="Q5SC51">
    <property type="glycosylation" value="1 site, No reported glycans"/>
</dbReference>
<dbReference type="Proteomes" id="UP000130023">
    <property type="component" value="Genome"/>
</dbReference>
<dbReference type="Proteomes" id="UP000181577">
    <property type="component" value="Genome"/>
</dbReference>
<dbReference type="GO" id="GO:0020002">
    <property type="term" value="C:host cell plasma membrane"/>
    <property type="evidence" value="ECO:0007669"/>
    <property type="project" value="UniProtKB-SubCell"/>
</dbReference>
<dbReference type="GO" id="GO:0016020">
    <property type="term" value="C:membrane"/>
    <property type="evidence" value="ECO:0007669"/>
    <property type="project" value="UniProtKB-KW"/>
</dbReference>
<dbReference type="GO" id="GO:0019031">
    <property type="term" value="C:viral envelope"/>
    <property type="evidence" value="ECO:0007669"/>
    <property type="project" value="UniProtKB-KW"/>
</dbReference>
<dbReference type="GO" id="GO:0055036">
    <property type="term" value="C:virion membrane"/>
    <property type="evidence" value="ECO:0007669"/>
    <property type="project" value="UniProtKB-SubCell"/>
</dbReference>
<dbReference type="GO" id="GO:0004308">
    <property type="term" value="F:exo-alpha-sialidase activity"/>
    <property type="evidence" value="ECO:0007669"/>
    <property type="project" value="InterPro"/>
</dbReference>
<dbReference type="GO" id="GO:0046789">
    <property type="term" value="F:host cell surface receptor binding"/>
    <property type="evidence" value="ECO:0007669"/>
    <property type="project" value="InterPro"/>
</dbReference>
<dbReference type="GO" id="GO:0046718">
    <property type="term" value="P:symbiont entry into host cell"/>
    <property type="evidence" value="ECO:0007669"/>
    <property type="project" value="UniProtKB-KW"/>
</dbReference>
<dbReference type="GO" id="GO:0019062">
    <property type="term" value="P:virion attachment to host cell"/>
    <property type="evidence" value="ECO:0007669"/>
    <property type="project" value="UniProtKB-KW"/>
</dbReference>
<dbReference type="CDD" id="cd15469">
    <property type="entry name" value="HN"/>
    <property type="match status" value="1"/>
</dbReference>
<dbReference type="FunFam" id="2.120.10.10:FF:000004">
    <property type="entry name" value="Hemagglutinin-neuraminidase"/>
    <property type="match status" value="1"/>
</dbReference>
<dbReference type="Gene3D" id="1.20.5.110">
    <property type="match status" value="1"/>
</dbReference>
<dbReference type="Gene3D" id="2.120.10.10">
    <property type="match status" value="1"/>
</dbReference>
<dbReference type="InterPro" id="IPR016285">
    <property type="entry name" value="Hemagglutn-neuramid"/>
</dbReference>
<dbReference type="InterPro" id="IPR000665">
    <property type="entry name" value="Hemagglutn/HN"/>
</dbReference>
<dbReference type="InterPro" id="IPR036278">
    <property type="entry name" value="Sialidase_sf"/>
</dbReference>
<dbReference type="Pfam" id="PF00423">
    <property type="entry name" value="HN"/>
    <property type="match status" value="1"/>
</dbReference>
<dbReference type="PIRSF" id="PIRSF001072">
    <property type="entry name" value="Hemagglut-neuramid_paramyxoV"/>
    <property type="match status" value="1"/>
</dbReference>
<dbReference type="SUPFAM" id="SSF50939">
    <property type="entry name" value="Sialidases"/>
    <property type="match status" value="1"/>
</dbReference>
<sequence length="582" mass="64127">MEPSKLFTISDNATFAPGPVINVADKKTFRTCFRILVLSVQAVTLILVIVNLGELVRMINDQGLSNQLSSITDKIRESANMIASAVGVMNQVIHGVTVSLPLQIEGNQNQLLSTLATICTSKKQVSNCSTNIPLVNDLRFINGINKFIIEDYATHDFSIGHPLNMPSFIPTATSPNGCTRIPSFSLGKTHWCYTHNVINANCKDHTSSNQYVSMGILVQTASGYPMFKTLKIQYLSDGLNRKSCSIATVPDGCAMYCYISTQLETDDYAGSSPPTQKLTLLFYNDTVTERTISPSGLEGNWATLVPGVGSGIYFENKLIFPAYGGVLPNSTLGVKSAREFFRPVNPYNPCSGPQQDLDQRALRSYFPSYFSNRRVQSAFLVCAWNQILVTNCELVVPSNNQTLMGAEGRVLLINNRLLYYQRSTSWWPYELLYEISFTFTNSGQSSVNMSWIPIYSFTRPGSGNCSGENVCPTACVSGVYLDPWPLTPYSHQSGINRNFYFTGALLNSSTTRVNPTLYVSALNNLKVLAPYGTQGLFASYTTTTCFQDTGDASVYCVYIMELASNIVGEFQILPVLTRLTIT</sequence>
<feature type="chain" id="PRO_0000462016" description="Hemagglutinin-neuraminidase">
    <location>
        <begin position="1"/>
        <end position="582"/>
    </location>
</feature>
<feature type="transmembrane region" description="Helical" evidence="5">
    <location>
        <begin position="35"/>
        <end position="55"/>
    </location>
</feature>
<feature type="site" description="Binding to the glycan motifs of the host receptor" evidence="4">
    <location>
        <position position="180"/>
    </location>
</feature>
<feature type="site" description="Binding to the glycan motifs of the host receptor" evidence="4">
    <location>
        <position position="242"/>
    </location>
</feature>
<feature type="site" description="Binding to the glycan motifs of the host receptor" evidence="4">
    <location>
        <position position="264"/>
    </location>
</feature>
<feature type="site" description="Binding to the glycan motifs of the host receptor" evidence="4">
    <location>
        <position position="323"/>
    </location>
</feature>
<feature type="site" description="Binding to the glycan motifs of the host receptor" evidence="4">
    <location>
        <position position="369"/>
    </location>
</feature>
<feature type="site" description="Binding to the glycan motifs of the host receptor" evidence="4">
    <location>
        <position position="407"/>
    </location>
</feature>
<feature type="site" description="Binding to the glycan motifs of the host receptor" evidence="4">
    <location>
        <position position="422"/>
    </location>
</feature>
<feature type="site" description="Binding to the glycan motifs of the host receptor" evidence="4">
    <location>
        <position position="512"/>
    </location>
</feature>
<feature type="site" description="Binding to the glycan motifs of the host receptor" evidence="4">
    <location>
        <position position="540"/>
    </location>
</feature>
<feature type="glycosylation site" description="N-linked (GlcNAc...) asparagine; by host" evidence="4">
    <location>
        <position position="284"/>
    </location>
</feature>
<feature type="glycosylation site" description="N-linked (GlcNAc...) asparagine; by host" evidence="4">
    <location>
        <position position="329"/>
    </location>
</feature>
<feature type="glycosylation site" description="N-linked (GlcNAc...) asparagine; by host" evidence="4">
    <location>
        <position position="400"/>
    </location>
</feature>
<feature type="glycosylation site" description="N-linked (GlcNAc...) asparagine; by host" evidence="4">
    <location>
        <position position="448"/>
    </location>
</feature>
<feature type="glycosylation site" description="N-linked (GlcNAc...) asparagine; by host" evidence="4">
    <location>
        <position position="507"/>
    </location>
</feature>
<feature type="disulfide bond" evidence="4">
    <location>
        <begin position="178"/>
        <end position="202"/>
    </location>
</feature>
<feature type="disulfide bond" evidence="4">
    <location>
        <begin position="192"/>
        <end position="253"/>
    </location>
</feature>
<feature type="disulfide bond" evidence="4">
    <location>
        <begin position="244"/>
        <end position="257"/>
    </location>
</feature>
<feature type="disulfide bond" evidence="4">
    <location>
        <begin position="350"/>
        <end position="471"/>
    </location>
</feature>
<feature type="disulfide bond" evidence="4">
    <location>
        <begin position="382"/>
        <end position="392"/>
    </location>
</feature>
<feature type="disulfide bond" evidence="4">
    <location>
        <begin position="465"/>
        <end position="475"/>
    </location>
</feature>
<feature type="disulfide bond" evidence="4">
    <location>
        <begin position="545"/>
        <end position="556"/>
    </location>
</feature>
<organism>
    <name type="scientific">Mumps virus genotype N (strain L-Zagreb vaccine)</name>
    <name type="common">MuV</name>
    <dbReference type="NCBI Taxonomy" id="301186"/>
    <lineage>
        <taxon>Viruses</taxon>
        <taxon>Riboviria</taxon>
        <taxon>Orthornavirae</taxon>
        <taxon>Negarnaviricota</taxon>
        <taxon>Haploviricotina</taxon>
        <taxon>Monjiviricetes</taxon>
        <taxon>Mononegavirales</taxon>
        <taxon>Paramyxoviridae</taxon>
        <taxon>Rubulavirinae</taxon>
        <taxon>Orthorubulavirus</taxon>
        <taxon>Orthorubulavirus parotitidis</taxon>
        <taxon>Mumps orthorubulavirus</taxon>
    </lineage>
</organism>
<comment type="function">
    <text evidence="2 4">Attaches the virus to alpha-2,3-linked sialic acid-containing cell receptors and thereby initiating infection (By similarity). Binding of HN protein to the receptor induces a conformational change that allows the F protein to trigger virion/cell membranes fusion (By similarity). Binds to the glycan motifs sialyl Lewis (SLe) and GM2 ganglioside (GM2-glycan) (By similarity).</text>
</comment>
<comment type="function">
    <text evidence="3">Neuraminidase activity ensures the efficient spread of the virus by dissociating the mature virions from the neuraminic acid containing glycoproteins.</text>
</comment>
<comment type="catalytic activity">
    <reaction evidence="4">
        <text>Hydrolysis of alpha-(2-&gt;3)-, alpha-(2-&gt;6)-, alpha-(2-&gt;8)- glycosidic linkages of terminal sialic acid residues in oligosaccharides, glycoproteins, glycolipids, colominic acid and synthetic substrates.</text>
        <dbReference type="EC" id="3.2.1.18"/>
    </reaction>
</comment>
<comment type="subunit">
    <text evidence="1 4">Homotetramer; composed of disulfide-linked homodimers (By similarity). Interacts with F protein trimer (By similarity).</text>
</comment>
<comment type="subcellular location">
    <subcellularLocation>
        <location evidence="7 8">Virion membrane</location>
        <topology evidence="4">Single-pass type II membrane protein</topology>
    </subcellularLocation>
    <subcellularLocation>
        <location evidence="4">Host cell membrane</location>
        <topology evidence="4">Single-pass type II membrane protein</topology>
    </subcellularLocation>
</comment>
<comment type="domain">
    <text evidence="4">The C-terminus (head domain) is involved in binding the cellular receptor.</text>
</comment>
<comment type="similarity">
    <text evidence="6">Belongs to the paramyxoviruses hemagglutinin-neuraminidase family.</text>
</comment>
<reference key="1">
    <citation type="journal article" date="2005" name="Virus Res.">
        <title>Genetic characterization of L-Zagreb mumps vaccine strain.</title>
        <authorList>
            <person name="Ivancic J."/>
            <person name="Kosutic Gulija T."/>
            <person name="Forcic D."/>
            <person name="Baricevic M."/>
            <person name="Jug R."/>
            <person name="Mesko-Prejac M."/>
            <person name="Mazuran R."/>
        </authorList>
    </citation>
    <scope>NUCLEOTIDE SEQUENCE [GENOMIC RNA]</scope>
    <source>
        <strain>L-Zagreb vaccine</strain>
    </source>
</reference>
<reference key="2">
    <citation type="journal article" date="2016" name="Virol. J.">
        <title>Identification of mumps virus protein and lipid composition by mass spectrometry.</title>
        <authorList>
            <person name="Brgles M."/>
            <person name="Bonta M."/>
            <person name="Santak M."/>
            <person name="Jagusic M."/>
            <person name="Forcic D."/>
            <person name="Halassy B."/>
            <person name="Allmaier G."/>
            <person name="Marchetti-Deschmann M."/>
        </authorList>
    </citation>
    <scope>IDENTIFICATION BY MASS SPECTROMETRY</scope>
    <scope>SUBCELLULAR LOCATION</scope>
    <source>
        <strain>L-Zagreb vaccine</strain>
    </source>
</reference>
<reference key="3">
    <citation type="journal article" date="2018" name="Virol. J.">
        <title>Mass spectrometry-based investigation of measles and mumps virus proteome.</title>
        <authorList>
            <person name="Sviben D."/>
            <person name="Forcic D."/>
            <person name="Halassy B."/>
            <person name="Allmaier G."/>
            <person name="Marchetti-Deschmann M."/>
            <person name="Brgles M."/>
        </authorList>
    </citation>
    <scope>IDENTIFICATION BY MASS SPECTROMETRY</scope>
    <scope>SUBCELLULAR LOCATION</scope>
    <source>
        <strain>L-Zagreb vaccine</strain>
    </source>
</reference>